<reference key="1">
    <citation type="journal article" date="2003" name="DNA Res.">
        <title>Complete genome structure of Gloeobacter violaceus PCC 7421, a cyanobacterium that lacks thylakoids.</title>
        <authorList>
            <person name="Nakamura Y."/>
            <person name="Kaneko T."/>
            <person name="Sato S."/>
            <person name="Mimuro M."/>
            <person name="Miyashita H."/>
            <person name="Tsuchiya T."/>
            <person name="Sasamoto S."/>
            <person name="Watanabe A."/>
            <person name="Kawashima K."/>
            <person name="Kishida Y."/>
            <person name="Kiyokawa C."/>
            <person name="Kohara M."/>
            <person name="Matsumoto M."/>
            <person name="Matsuno A."/>
            <person name="Nakazaki N."/>
            <person name="Shimpo S."/>
            <person name="Takeuchi C."/>
            <person name="Yamada M."/>
            <person name="Tabata S."/>
        </authorList>
    </citation>
    <scope>NUCLEOTIDE SEQUENCE [LARGE SCALE GENOMIC DNA]</scope>
    <source>
        <strain>ATCC 29082 / PCC 7421</strain>
    </source>
</reference>
<feature type="chain" id="PRO_0000237885" description="Shikimate kinase">
    <location>
        <begin position="1"/>
        <end position="177"/>
    </location>
</feature>
<feature type="binding site" evidence="1">
    <location>
        <begin position="14"/>
        <end position="19"/>
    </location>
    <ligand>
        <name>ATP</name>
        <dbReference type="ChEBI" id="CHEBI:30616"/>
    </ligand>
</feature>
<feature type="binding site" evidence="1">
    <location>
        <position position="18"/>
    </location>
    <ligand>
        <name>Mg(2+)</name>
        <dbReference type="ChEBI" id="CHEBI:18420"/>
    </ligand>
</feature>
<feature type="binding site" evidence="1">
    <location>
        <position position="36"/>
    </location>
    <ligand>
        <name>substrate</name>
    </ligand>
</feature>
<feature type="binding site" evidence="1">
    <location>
        <position position="60"/>
    </location>
    <ligand>
        <name>substrate</name>
    </ligand>
</feature>
<feature type="binding site" evidence="1">
    <location>
        <position position="82"/>
    </location>
    <ligand>
        <name>substrate</name>
    </ligand>
</feature>
<feature type="binding site" evidence="1">
    <location>
        <position position="120"/>
    </location>
    <ligand>
        <name>ATP</name>
        <dbReference type="ChEBI" id="CHEBI:30616"/>
    </ligand>
</feature>
<feature type="binding site" evidence="1">
    <location>
        <position position="139"/>
    </location>
    <ligand>
        <name>substrate</name>
    </ligand>
</feature>
<accession>Q7NH27</accession>
<proteinExistence type="inferred from homology"/>
<keyword id="KW-0028">Amino-acid biosynthesis</keyword>
<keyword id="KW-0057">Aromatic amino acid biosynthesis</keyword>
<keyword id="KW-0067">ATP-binding</keyword>
<keyword id="KW-0963">Cytoplasm</keyword>
<keyword id="KW-0418">Kinase</keyword>
<keyword id="KW-0460">Magnesium</keyword>
<keyword id="KW-0479">Metal-binding</keyword>
<keyword id="KW-0547">Nucleotide-binding</keyword>
<keyword id="KW-1185">Reference proteome</keyword>
<keyword id="KW-0808">Transferase</keyword>
<evidence type="ECO:0000255" key="1">
    <source>
        <dbReference type="HAMAP-Rule" id="MF_00109"/>
    </source>
</evidence>
<gene>
    <name evidence="1" type="primary">aroK</name>
    <name type="ordered locus">glr2710</name>
</gene>
<comment type="function">
    <text evidence="1">Catalyzes the specific phosphorylation of the 3-hydroxyl group of shikimic acid using ATP as a cosubstrate.</text>
</comment>
<comment type="catalytic activity">
    <reaction evidence="1">
        <text>shikimate + ATP = 3-phosphoshikimate + ADP + H(+)</text>
        <dbReference type="Rhea" id="RHEA:13121"/>
        <dbReference type="ChEBI" id="CHEBI:15378"/>
        <dbReference type="ChEBI" id="CHEBI:30616"/>
        <dbReference type="ChEBI" id="CHEBI:36208"/>
        <dbReference type="ChEBI" id="CHEBI:145989"/>
        <dbReference type="ChEBI" id="CHEBI:456216"/>
        <dbReference type="EC" id="2.7.1.71"/>
    </reaction>
</comment>
<comment type="cofactor">
    <cofactor evidence="1">
        <name>Mg(2+)</name>
        <dbReference type="ChEBI" id="CHEBI:18420"/>
    </cofactor>
    <text evidence="1">Binds 1 Mg(2+) ion per subunit.</text>
</comment>
<comment type="pathway">
    <text evidence="1">Metabolic intermediate biosynthesis; chorismate biosynthesis; chorismate from D-erythrose 4-phosphate and phosphoenolpyruvate: step 5/7.</text>
</comment>
<comment type="subunit">
    <text evidence="1">Monomer.</text>
</comment>
<comment type="subcellular location">
    <subcellularLocation>
        <location evidence="1">Cytoplasm</location>
    </subcellularLocation>
</comment>
<comment type="similarity">
    <text evidence="1">Belongs to the shikimate kinase family.</text>
</comment>
<name>AROK_GLOVI</name>
<sequence length="177" mass="19103">MLKGVSLYLVGMMGSGKSTVGRLLAEKLGYGFVDLDALIEQVSGKRVGEIFEREGEAVFRDLESRVLAEVSAYTRLVVATGGGVVLARRNWGYLHHGVVVWLDADIETLLGRVEHEPGTRPLLAGGDRHLRLVELLGERARLYAQADVRVSAAGLPPAVAEETLRCLAARLAEDSAP</sequence>
<organism>
    <name type="scientific">Gloeobacter violaceus (strain ATCC 29082 / PCC 7421)</name>
    <dbReference type="NCBI Taxonomy" id="251221"/>
    <lineage>
        <taxon>Bacteria</taxon>
        <taxon>Bacillati</taxon>
        <taxon>Cyanobacteriota</taxon>
        <taxon>Cyanophyceae</taxon>
        <taxon>Gloeobacterales</taxon>
        <taxon>Gloeobacteraceae</taxon>
        <taxon>Gloeobacter</taxon>
    </lineage>
</organism>
<dbReference type="EC" id="2.7.1.71" evidence="1"/>
<dbReference type="EMBL" id="BA000045">
    <property type="protein sequence ID" value="BAC90651.1"/>
    <property type="molecule type" value="Genomic_DNA"/>
</dbReference>
<dbReference type="RefSeq" id="NP_925656.1">
    <property type="nucleotide sequence ID" value="NC_005125.1"/>
</dbReference>
<dbReference type="RefSeq" id="WP_011142704.1">
    <property type="nucleotide sequence ID" value="NC_005125.1"/>
</dbReference>
<dbReference type="SMR" id="Q7NH27"/>
<dbReference type="FunCoup" id="Q7NH27">
    <property type="interactions" value="132"/>
</dbReference>
<dbReference type="STRING" id="251221.gene:10760212"/>
<dbReference type="EnsemblBacteria" id="BAC90651">
    <property type="protein sequence ID" value="BAC90651"/>
    <property type="gene ID" value="BAC90651"/>
</dbReference>
<dbReference type="KEGG" id="gvi:glr2710"/>
<dbReference type="PATRIC" id="fig|251221.4.peg.2737"/>
<dbReference type="eggNOG" id="COG0703">
    <property type="taxonomic scope" value="Bacteria"/>
</dbReference>
<dbReference type="HOGENOM" id="CLU_057607_2_3_3"/>
<dbReference type="InParanoid" id="Q7NH27"/>
<dbReference type="OrthoDB" id="9800332at2"/>
<dbReference type="PhylomeDB" id="Q7NH27"/>
<dbReference type="UniPathway" id="UPA00053">
    <property type="reaction ID" value="UER00088"/>
</dbReference>
<dbReference type="Proteomes" id="UP000000557">
    <property type="component" value="Chromosome"/>
</dbReference>
<dbReference type="GO" id="GO:0005737">
    <property type="term" value="C:cytoplasm"/>
    <property type="evidence" value="ECO:0007669"/>
    <property type="project" value="UniProtKB-SubCell"/>
</dbReference>
<dbReference type="GO" id="GO:0005524">
    <property type="term" value="F:ATP binding"/>
    <property type="evidence" value="ECO:0007669"/>
    <property type="project" value="UniProtKB-UniRule"/>
</dbReference>
<dbReference type="GO" id="GO:0000287">
    <property type="term" value="F:magnesium ion binding"/>
    <property type="evidence" value="ECO:0007669"/>
    <property type="project" value="UniProtKB-UniRule"/>
</dbReference>
<dbReference type="GO" id="GO:0004765">
    <property type="term" value="F:shikimate kinase activity"/>
    <property type="evidence" value="ECO:0000318"/>
    <property type="project" value="GO_Central"/>
</dbReference>
<dbReference type="GO" id="GO:0008652">
    <property type="term" value="P:amino acid biosynthetic process"/>
    <property type="evidence" value="ECO:0007669"/>
    <property type="project" value="UniProtKB-KW"/>
</dbReference>
<dbReference type="GO" id="GO:0009073">
    <property type="term" value="P:aromatic amino acid family biosynthetic process"/>
    <property type="evidence" value="ECO:0007669"/>
    <property type="project" value="UniProtKB-KW"/>
</dbReference>
<dbReference type="GO" id="GO:0009423">
    <property type="term" value="P:chorismate biosynthetic process"/>
    <property type="evidence" value="ECO:0007669"/>
    <property type="project" value="UniProtKB-UniRule"/>
</dbReference>
<dbReference type="CDD" id="cd00464">
    <property type="entry name" value="SK"/>
    <property type="match status" value="1"/>
</dbReference>
<dbReference type="FunFam" id="3.40.50.300:FF:001033">
    <property type="entry name" value="Shikimate kinase 2, chloroplastic"/>
    <property type="match status" value="1"/>
</dbReference>
<dbReference type="Gene3D" id="3.40.50.300">
    <property type="entry name" value="P-loop containing nucleotide triphosphate hydrolases"/>
    <property type="match status" value="1"/>
</dbReference>
<dbReference type="HAMAP" id="MF_00109">
    <property type="entry name" value="Shikimate_kinase"/>
    <property type="match status" value="1"/>
</dbReference>
<dbReference type="InterPro" id="IPR027417">
    <property type="entry name" value="P-loop_NTPase"/>
</dbReference>
<dbReference type="InterPro" id="IPR031322">
    <property type="entry name" value="Shikimate/glucono_kinase"/>
</dbReference>
<dbReference type="InterPro" id="IPR000623">
    <property type="entry name" value="Shikimate_kinase/TSH1"/>
</dbReference>
<dbReference type="InterPro" id="IPR023000">
    <property type="entry name" value="Shikimate_kinase_CS"/>
</dbReference>
<dbReference type="PANTHER" id="PTHR21087">
    <property type="entry name" value="SHIKIMATE KINASE"/>
    <property type="match status" value="1"/>
</dbReference>
<dbReference type="PANTHER" id="PTHR21087:SF16">
    <property type="entry name" value="SHIKIMATE KINASE 1, CHLOROPLASTIC"/>
    <property type="match status" value="1"/>
</dbReference>
<dbReference type="Pfam" id="PF01202">
    <property type="entry name" value="SKI"/>
    <property type="match status" value="1"/>
</dbReference>
<dbReference type="PRINTS" id="PR01100">
    <property type="entry name" value="SHIKIMTKNASE"/>
</dbReference>
<dbReference type="SUPFAM" id="SSF52540">
    <property type="entry name" value="P-loop containing nucleoside triphosphate hydrolases"/>
    <property type="match status" value="1"/>
</dbReference>
<dbReference type="PROSITE" id="PS01128">
    <property type="entry name" value="SHIKIMATE_KINASE"/>
    <property type="match status" value="1"/>
</dbReference>
<protein>
    <recommendedName>
        <fullName evidence="1">Shikimate kinase</fullName>
        <shortName evidence="1">SK</shortName>
        <ecNumber evidence="1">2.7.1.71</ecNumber>
    </recommendedName>
</protein>